<proteinExistence type="evidence at transcript level"/>
<feature type="signal peptide" evidence="2">
    <location>
        <begin position="1"/>
        <end position="19"/>
    </location>
</feature>
<feature type="chain" id="PRO_0000417496" description="Protein ASPARTIC PROTEASE IN GUARD CELL 2">
    <location>
        <begin position="20"/>
        <end position="470"/>
    </location>
</feature>
<feature type="domain" description="Peptidase A1" evidence="3">
    <location>
        <begin position="131"/>
        <end position="466"/>
    </location>
</feature>
<feature type="active site" evidence="4">
    <location>
        <position position="149"/>
    </location>
</feature>
<feature type="active site" evidence="4">
    <location>
        <position position="350"/>
    </location>
</feature>
<feature type="disulfide bond" evidence="1">
    <location>
        <begin position="159"/>
        <end position="162"/>
    </location>
</feature>
<feature type="disulfide bond" evidence="1">
    <location>
        <begin position="165"/>
        <end position="239"/>
    </location>
</feature>
<feature type="disulfide bond" evidence="1">
    <location>
        <begin position="186"/>
        <end position="204"/>
    </location>
</feature>
<feature type="disulfide bond" evidence="1">
    <location>
        <begin position="191"/>
        <end position="199"/>
    </location>
</feature>
<feature type="disulfide bond" evidence="1">
    <location>
        <begin position="278"/>
        <end position="470"/>
    </location>
</feature>
<feature type="disulfide bond" evidence="1">
    <location>
        <begin position="389"/>
        <end position="431"/>
    </location>
</feature>
<keyword id="KW-0064">Aspartyl protease</keyword>
<keyword id="KW-1015">Disulfide bond</keyword>
<keyword id="KW-0238">DNA-binding</keyword>
<keyword id="KW-0378">Hydrolase</keyword>
<keyword id="KW-0645">Protease</keyword>
<keyword id="KW-1185">Reference proteome</keyword>
<keyword id="KW-0732">Signal</keyword>
<sequence>MLLPLFFFFLHLHLHLSSSSSISFPDFQIIDVLQPPLTVTATLPDFNNTHFSDESSSKYTLRLLHRDRFPSVTYRNHHHRLHARMRRDTDRVSAILRRISGKVIPSSDSRYEVNDFGSDIVSGMDQGSGEYFVRIGVGSPPRDQYMVIDSGSDMVWVQCQPCKLCYKQSDPVFDPAKSGSYTGVSCGSSVCDRIENSGCHSGGCRYEVMYGDGSYTKGTLALETLTFAKTVVRNVAMGCGHRNRGMFIGAAGLLGIGGGSMSFVGQLSGQTGGAFGYCLVSRGTDSTGSLVFGREALPVGASWVPLVRNPRAPSFYYVGLKGLGVGGVRIPLPDGVFDLTETGDGGVVMDTGTAVTRLPTAAYVAFRDGFKSQTANLPRASGVSIFDTCYDLSGFVSVRVPTVSFYFTEGPVLTLPARNFLMPVDDSGTYCFAFAASPTGLSIIGNIQQEGIQVSFDGANGFVGFGPNVC</sequence>
<protein>
    <recommendedName>
        <fullName>Protein ASPARTIC PROTEASE IN GUARD CELL 2</fullName>
        <shortName>AtASPG2</shortName>
        <ecNumber>3.4.23.-</ecNumber>
    </recommendedName>
</protein>
<comment type="function">
    <text evidence="5">Aspartic protease that may be involved in drought avoidance through abscisic acid signaling.</text>
</comment>
<comment type="disruption phenotype">
    <text evidence="5">No effect on stomatal closure.</text>
</comment>
<comment type="similarity">
    <text evidence="6">Belongs to the peptidase A1 family.</text>
</comment>
<dbReference type="EC" id="3.4.23.-"/>
<dbReference type="EMBL" id="AP002050">
    <property type="protein sequence ID" value="BAB03167.1"/>
    <property type="molecule type" value="Genomic_DNA"/>
</dbReference>
<dbReference type="EMBL" id="AP000383">
    <property type="protein sequence ID" value="BAB03167.1"/>
    <property type="status" value="JOINED"/>
    <property type="molecule type" value="Genomic_DNA"/>
</dbReference>
<dbReference type="EMBL" id="CP002686">
    <property type="protein sequence ID" value="AEE76319.1"/>
    <property type="molecule type" value="Genomic_DNA"/>
</dbReference>
<dbReference type="EMBL" id="BT003814">
    <property type="protein sequence ID" value="AAO41867.1"/>
    <property type="molecule type" value="mRNA"/>
</dbReference>
<dbReference type="RefSeq" id="NP_188636.2">
    <property type="nucleotide sequence ID" value="NM_112892.6"/>
</dbReference>
<dbReference type="SMR" id="Q9LHE3"/>
<dbReference type="FunCoup" id="Q9LHE3">
    <property type="interactions" value="17"/>
</dbReference>
<dbReference type="STRING" id="3702.Q9LHE3"/>
<dbReference type="MEROPS" id="A01.A10"/>
<dbReference type="PaxDb" id="3702-AT3G20015.1"/>
<dbReference type="ProteomicsDB" id="246866"/>
<dbReference type="EnsemblPlants" id="AT3G20015.1">
    <property type="protein sequence ID" value="AT3G20015.1"/>
    <property type="gene ID" value="AT3G20015"/>
</dbReference>
<dbReference type="GeneID" id="821540"/>
<dbReference type="Gramene" id="AT3G20015.1">
    <property type="protein sequence ID" value="AT3G20015.1"/>
    <property type="gene ID" value="AT3G20015"/>
</dbReference>
<dbReference type="KEGG" id="ath:AT3G20015"/>
<dbReference type="Araport" id="AT3G20015"/>
<dbReference type="TAIR" id="AT3G20015"/>
<dbReference type="eggNOG" id="KOG1339">
    <property type="taxonomic scope" value="Eukaryota"/>
</dbReference>
<dbReference type="HOGENOM" id="CLU_005738_5_0_1"/>
<dbReference type="InParanoid" id="Q9LHE3"/>
<dbReference type="OMA" id="GCRYEVM"/>
<dbReference type="PhylomeDB" id="Q9LHE3"/>
<dbReference type="PRO" id="PR:Q9LHE3"/>
<dbReference type="Proteomes" id="UP000006548">
    <property type="component" value="Chromosome 3"/>
</dbReference>
<dbReference type="ExpressionAtlas" id="Q9LHE3">
    <property type="expression patterns" value="baseline and differential"/>
</dbReference>
<dbReference type="GO" id="GO:0004190">
    <property type="term" value="F:aspartic-type endopeptidase activity"/>
    <property type="evidence" value="ECO:0007669"/>
    <property type="project" value="UniProtKB-KW"/>
</dbReference>
<dbReference type="GO" id="GO:0003677">
    <property type="term" value="F:DNA binding"/>
    <property type="evidence" value="ECO:0007669"/>
    <property type="project" value="UniProtKB-KW"/>
</dbReference>
<dbReference type="GO" id="GO:0006508">
    <property type="term" value="P:proteolysis"/>
    <property type="evidence" value="ECO:0007669"/>
    <property type="project" value="UniProtKB-KW"/>
</dbReference>
<dbReference type="CDD" id="cd05472">
    <property type="entry name" value="cnd41_like"/>
    <property type="match status" value="1"/>
</dbReference>
<dbReference type="FunFam" id="2.40.70.10:FF:000010">
    <property type="entry name" value="Aspartyl protease family protein 2"/>
    <property type="match status" value="1"/>
</dbReference>
<dbReference type="FunFam" id="2.40.70.10:FF:000016">
    <property type="entry name" value="Probable aspartic protease At2g35615"/>
    <property type="match status" value="1"/>
</dbReference>
<dbReference type="Gene3D" id="2.40.70.10">
    <property type="entry name" value="Acid Proteases"/>
    <property type="match status" value="2"/>
</dbReference>
<dbReference type="InterPro" id="IPR001461">
    <property type="entry name" value="Aspartic_peptidase_A1"/>
</dbReference>
<dbReference type="InterPro" id="IPR033873">
    <property type="entry name" value="CND41-like"/>
</dbReference>
<dbReference type="InterPro" id="IPR033121">
    <property type="entry name" value="PEPTIDASE_A1"/>
</dbReference>
<dbReference type="InterPro" id="IPR021109">
    <property type="entry name" value="Peptidase_aspartic_dom_sf"/>
</dbReference>
<dbReference type="InterPro" id="IPR032799">
    <property type="entry name" value="TAXi_C"/>
</dbReference>
<dbReference type="InterPro" id="IPR032861">
    <property type="entry name" value="TAXi_N"/>
</dbReference>
<dbReference type="PANTHER" id="PTHR13683">
    <property type="entry name" value="ASPARTYL PROTEASES"/>
    <property type="match status" value="1"/>
</dbReference>
<dbReference type="PANTHER" id="PTHR13683:SF265">
    <property type="entry name" value="PROTEIN ASPARTIC PROTEASE IN GUARD CELL 2"/>
    <property type="match status" value="1"/>
</dbReference>
<dbReference type="Pfam" id="PF14541">
    <property type="entry name" value="TAXi_C"/>
    <property type="match status" value="1"/>
</dbReference>
<dbReference type="Pfam" id="PF14543">
    <property type="entry name" value="TAXi_N"/>
    <property type="match status" value="1"/>
</dbReference>
<dbReference type="SUPFAM" id="SSF50630">
    <property type="entry name" value="Acid proteases"/>
    <property type="match status" value="1"/>
</dbReference>
<dbReference type="PROSITE" id="PS00141">
    <property type="entry name" value="ASP_PROTEASE"/>
    <property type="match status" value="1"/>
</dbReference>
<dbReference type="PROSITE" id="PS51767">
    <property type="entry name" value="PEPTIDASE_A1"/>
    <property type="match status" value="1"/>
</dbReference>
<name>ASPG2_ARATH</name>
<organism>
    <name type="scientific">Arabidopsis thaliana</name>
    <name type="common">Mouse-ear cress</name>
    <dbReference type="NCBI Taxonomy" id="3702"/>
    <lineage>
        <taxon>Eukaryota</taxon>
        <taxon>Viridiplantae</taxon>
        <taxon>Streptophyta</taxon>
        <taxon>Embryophyta</taxon>
        <taxon>Tracheophyta</taxon>
        <taxon>Spermatophyta</taxon>
        <taxon>Magnoliopsida</taxon>
        <taxon>eudicotyledons</taxon>
        <taxon>Gunneridae</taxon>
        <taxon>Pentapetalae</taxon>
        <taxon>rosids</taxon>
        <taxon>malvids</taxon>
        <taxon>Brassicales</taxon>
        <taxon>Brassicaceae</taxon>
        <taxon>Camelineae</taxon>
        <taxon>Arabidopsis</taxon>
    </lineage>
</organism>
<evidence type="ECO:0000250" key="1"/>
<evidence type="ECO:0000255" key="2"/>
<evidence type="ECO:0000255" key="3">
    <source>
        <dbReference type="PROSITE-ProRule" id="PRU01103"/>
    </source>
</evidence>
<evidence type="ECO:0000255" key="4">
    <source>
        <dbReference type="PROSITE-ProRule" id="PRU10094"/>
    </source>
</evidence>
<evidence type="ECO:0000269" key="5">
    <source>
    </source>
</evidence>
<evidence type="ECO:0000305" key="6"/>
<gene>
    <name type="primary">ASPG2</name>
    <name type="ordered locus">At3g20015</name>
    <name type="ORF">MZE19.7</name>
</gene>
<accession>Q9LHE3</accession>
<reference key="1">
    <citation type="journal article" date="2000" name="DNA Res.">
        <title>Structural analysis of Arabidopsis thaliana chromosome 3. II. Sequence features of the 4,251,695 bp regions covered by 90 P1, TAC and BAC clones.</title>
        <authorList>
            <person name="Kaneko T."/>
            <person name="Katoh T."/>
            <person name="Sato S."/>
            <person name="Nakamura Y."/>
            <person name="Asamizu E."/>
            <person name="Tabata S."/>
        </authorList>
    </citation>
    <scope>NUCLEOTIDE SEQUENCE [LARGE SCALE GENOMIC DNA]</scope>
    <source>
        <strain>cv. Columbia</strain>
    </source>
</reference>
<reference key="2">
    <citation type="journal article" date="2017" name="Plant J.">
        <title>Araport11: a complete reannotation of the Arabidopsis thaliana reference genome.</title>
        <authorList>
            <person name="Cheng C.Y."/>
            <person name="Krishnakumar V."/>
            <person name="Chan A.P."/>
            <person name="Thibaud-Nissen F."/>
            <person name="Schobel S."/>
            <person name="Town C.D."/>
        </authorList>
    </citation>
    <scope>GENOME REANNOTATION</scope>
    <source>
        <strain>cv. Columbia</strain>
    </source>
</reference>
<reference key="3">
    <citation type="journal article" date="2003" name="Science">
        <title>Empirical analysis of transcriptional activity in the Arabidopsis genome.</title>
        <authorList>
            <person name="Yamada K."/>
            <person name="Lim J."/>
            <person name="Dale J.M."/>
            <person name="Chen H."/>
            <person name="Shinn P."/>
            <person name="Palm C.J."/>
            <person name="Southwick A.M."/>
            <person name="Wu H.C."/>
            <person name="Kim C.J."/>
            <person name="Nguyen M."/>
            <person name="Pham P.K."/>
            <person name="Cheuk R.F."/>
            <person name="Karlin-Newmann G."/>
            <person name="Liu S.X."/>
            <person name="Lam B."/>
            <person name="Sakano H."/>
            <person name="Wu T."/>
            <person name="Yu G."/>
            <person name="Miranda M."/>
            <person name="Quach H.L."/>
            <person name="Tripp M."/>
            <person name="Chang C.H."/>
            <person name="Lee J.M."/>
            <person name="Toriumi M.J."/>
            <person name="Chan M.M."/>
            <person name="Tang C.C."/>
            <person name="Onodera C.S."/>
            <person name="Deng J.M."/>
            <person name="Akiyama K."/>
            <person name="Ansari Y."/>
            <person name="Arakawa T."/>
            <person name="Banh J."/>
            <person name="Banno F."/>
            <person name="Bowser L."/>
            <person name="Brooks S.Y."/>
            <person name="Carninci P."/>
            <person name="Chao Q."/>
            <person name="Choy N."/>
            <person name="Enju A."/>
            <person name="Goldsmith A.D."/>
            <person name="Gurjal M."/>
            <person name="Hansen N.F."/>
            <person name="Hayashizaki Y."/>
            <person name="Johnson-Hopson C."/>
            <person name="Hsuan V.W."/>
            <person name="Iida K."/>
            <person name="Karnes M."/>
            <person name="Khan S."/>
            <person name="Koesema E."/>
            <person name="Ishida J."/>
            <person name="Jiang P.X."/>
            <person name="Jones T."/>
            <person name="Kawai J."/>
            <person name="Kamiya A."/>
            <person name="Meyers C."/>
            <person name="Nakajima M."/>
            <person name="Narusaka M."/>
            <person name="Seki M."/>
            <person name="Sakurai T."/>
            <person name="Satou M."/>
            <person name="Tamse R."/>
            <person name="Vaysberg M."/>
            <person name="Wallender E.K."/>
            <person name="Wong C."/>
            <person name="Yamamura Y."/>
            <person name="Yuan S."/>
            <person name="Shinozaki K."/>
            <person name="Davis R.W."/>
            <person name="Theologis A."/>
            <person name="Ecker J.R."/>
        </authorList>
    </citation>
    <scope>NUCLEOTIDE SEQUENCE [LARGE SCALE MRNA]</scope>
    <source>
        <strain>cv. Columbia</strain>
    </source>
</reference>
<reference key="4">
    <citation type="journal article" date="2004" name="Phytochemistry">
        <title>The S8 serine, C1A cysteine and A1 aspartic protease families in Arabidopsis.</title>
        <authorList>
            <person name="Beers E.P."/>
            <person name="Jones A.M."/>
            <person name="Dickerman A.W."/>
        </authorList>
    </citation>
    <scope>IDENTIFICATION</scope>
</reference>
<reference key="5">
    <citation type="journal article" date="2012" name="J. Exp. Bot.">
        <title>Overexpression of the aspartic protease ASPG1 gene confers drought avoidance in Arabidopsis.</title>
        <authorList>
            <person name="Yao X."/>
            <person name="Xiong W."/>
            <person name="Ye T."/>
            <person name="Wu Y."/>
        </authorList>
    </citation>
    <scope>FUNCTION</scope>
    <scope>DISRUPTION PHENOTYPE</scope>
    <source>
        <strain>cv. Columbia</strain>
    </source>
</reference>